<gene>
    <name evidence="1" type="primary">atpH</name>
    <name type="ordered locus">CLK_3328</name>
</gene>
<keyword id="KW-0066">ATP synthesis</keyword>
<keyword id="KW-1003">Cell membrane</keyword>
<keyword id="KW-0139">CF(1)</keyword>
<keyword id="KW-0375">Hydrogen ion transport</keyword>
<keyword id="KW-0406">Ion transport</keyword>
<keyword id="KW-0472">Membrane</keyword>
<keyword id="KW-0813">Transport</keyword>
<comment type="function">
    <text evidence="1">F(1)F(0) ATP synthase produces ATP from ADP in the presence of a proton or sodium gradient. F-type ATPases consist of two structural domains, F(1) containing the extramembraneous catalytic core and F(0) containing the membrane proton channel, linked together by a central stalk and a peripheral stalk. During catalysis, ATP synthesis in the catalytic domain of F(1) is coupled via a rotary mechanism of the central stalk subunits to proton translocation.</text>
</comment>
<comment type="function">
    <text evidence="1">This protein is part of the stalk that links CF(0) to CF(1). It either transmits conformational changes from CF(0) to CF(1) or is implicated in proton conduction.</text>
</comment>
<comment type="subunit">
    <text evidence="1">F-type ATPases have 2 components, F(1) - the catalytic core - and F(0) - the membrane proton channel. F(1) has five subunits: alpha(3), beta(3), gamma(1), delta(1), epsilon(1). F(0) has three main subunits: a(1), b(2) and c(10-14). The alpha and beta chains form an alternating ring which encloses part of the gamma chain. F(1) is attached to F(0) by a central stalk formed by the gamma and epsilon chains, while a peripheral stalk is formed by the delta and b chains.</text>
</comment>
<comment type="subcellular location">
    <subcellularLocation>
        <location evidence="1">Cell membrane</location>
        <topology evidence="1">Peripheral membrane protein</topology>
    </subcellularLocation>
</comment>
<comment type="similarity">
    <text evidence="1">Belongs to the ATPase delta chain family.</text>
</comment>
<reference key="1">
    <citation type="journal article" date="2007" name="PLoS ONE">
        <title>Analysis of the neurotoxin complex genes in Clostridium botulinum A1-A4 and B1 strains: BoNT/A3, /Ba4 and /B1 clusters are located within plasmids.</title>
        <authorList>
            <person name="Smith T.J."/>
            <person name="Hill K.K."/>
            <person name="Foley B.T."/>
            <person name="Detter J.C."/>
            <person name="Munk A.C."/>
            <person name="Bruce D.C."/>
            <person name="Doggett N.A."/>
            <person name="Smith L.A."/>
            <person name="Marks J.D."/>
            <person name="Xie G."/>
            <person name="Brettin T.S."/>
        </authorList>
    </citation>
    <scope>NUCLEOTIDE SEQUENCE [LARGE SCALE GENOMIC DNA]</scope>
    <source>
        <strain>Loch Maree / Type A3</strain>
    </source>
</reference>
<sequence>MYEYLDRRYALALYEVAEENNKVDEYLRDLKEVVNIIKNSEDICKILKHPEISTSRKKEIFTEIFKDKVDDKILSFLLVLIEKERILYLEEKLKEMEKIYLEKNNMILANVKTVIPLLKEEREELIEKLGNKYNKKIILEEEIDKSIIGGVYVRVGDDVLDGTLSTRLKDIKKMMLKRE</sequence>
<name>ATPD_CLOBM</name>
<dbReference type="EMBL" id="CP000962">
    <property type="protein sequence ID" value="ACA55369.1"/>
    <property type="molecule type" value="Genomic_DNA"/>
</dbReference>
<dbReference type="RefSeq" id="WP_012343360.1">
    <property type="nucleotide sequence ID" value="NC_010520.1"/>
</dbReference>
<dbReference type="SMR" id="B1KSS5"/>
<dbReference type="KEGG" id="cbl:CLK_3328"/>
<dbReference type="HOGENOM" id="CLU_085114_4_0_9"/>
<dbReference type="GO" id="GO:0005886">
    <property type="term" value="C:plasma membrane"/>
    <property type="evidence" value="ECO:0007669"/>
    <property type="project" value="UniProtKB-SubCell"/>
</dbReference>
<dbReference type="GO" id="GO:0045259">
    <property type="term" value="C:proton-transporting ATP synthase complex"/>
    <property type="evidence" value="ECO:0007669"/>
    <property type="project" value="UniProtKB-KW"/>
</dbReference>
<dbReference type="GO" id="GO:0046933">
    <property type="term" value="F:proton-transporting ATP synthase activity, rotational mechanism"/>
    <property type="evidence" value="ECO:0007669"/>
    <property type="project" value="UniProtKB-UniRule"/>
</dbReference>
<dbReference type="Gene3D" id="1.10.520.20">
    <property type="entry name" value="N-terminal domain of the delta subunit of the F1F0-ATP synthase"/>
    <property type="match status" value="1"/>
</dbReference>
<dbReference type="HAMAP" id="MF_01416">
    <property type="entry name" value="ATP_synth_delta_bact"/>
    <property type="match status" value="1"/>
</dbReference>
<dbReference type="InterPro" id="IPR026015">
    <property type="entry name" value="ATP_synth_OSCP/delta_N_sf"/>
</dbReference>
<dbReference type="InterPro" id="IPR020781">
    <property type="entry name" value="ATPase_OSCP/d_CS"/>
</dbReference>
<dbReference type="InterPro" id="IPR000711">
    <property type="entry name" value="ATPase_OSCP/dsu"/>
</dbReference>
<dbReference type="NCBIfam" id="TIGR01145">
    <property type="entry name" value="ATP_synt_delta"/>
    <property type="match status" value="1"/>
</dbReference>
<dbReference type="NCBIfam" id="NF004403">
    <property type="entry name" value="PRK05758.2-4"/>
    <property type="match status" value="1"/>
</dbReference>
<dbReference type="PANTHER" id="PTHR11910">
    <property type="entry name" value="ATP SYNTHASE DELTA CHAIN"/>
    <property type="match status" value="1"/>
</dbReference>
<dbReference type="Pfam" id="PF00213">
    <property type="entry name" value="OSCP"/>
    <property type="match status" value="1"/>
</dbReference>
<dbReference type="PRINTS" id="PR00125">
    <property type="entry name" value="ATPASEDELTA"/>
</dbReference>
<dbReference type="SUPFAM" id="SSF47928">
    <property type="entry name" value="N-terminal domain of the delta subunit of the F1F0-ATP synthase"/>
    <property type="match status" value="1"/>
</dbReference>
<dbReference type="SUPFAM" id="SSF160527">
    <property type="entry name" value="V-type ATPase subunit E-like"/>
    <property type="match status" value="1"/>
</dbReference>
<dbReference type="PROSITE" id="PS00389">
    <property type="entry name" value="ATPASE_DELTA"/>
    <property type="match status" value="1"/>
</dbReference>
<feature type="chain" id="PRO_1000184676" description="ATP synthase subunit delta">
    <location>
        <begin position="1"/>
        <end position="179"/>
    </location>
</feature>
<organism>
    <name type="scientific">Clostridium botulinum (strain Loch Maree / Type A3)</name>
    <dbReference type="NCBI Taxonomy" id="498214"/>
    <lineage>
        <taxon>Bacteria</taxon>
        <taxon>Bacillati</taxon>
        <taxon>Bacillota</taxon>
        <taxon>Clostridia</taxon>
        <taxon>Eubacteriales</taxon>
        <taxon>Clostridiaceae</taxon>
        <taxon>Clostridium</taxon>
    </lineage>
</organism>
<protein>
    <recommendedName>
        <fullName evidence="1">ATP synthase subunit delta</fullName>
    </recommendedName>
    <alternativeName>
        <fullName evidence="1">ATP synthase F(1) sector subunit delta</fullName>
    </alternativeName>
    <alternativeName>
        <fullName evidence="1">F-type ATPase subunit delta</fullName>
        <shortName evidence="1">F-ATPase subunit delta</shortName>
    </alternativeName>
</protein>
<proteinExistence type="inferred from homology"/>
<accession>B1KSS5</accession>
<evidence type="ECO:0000255" key="1">
    <source>
        <dbReference type="HAMAP-Rule" id="MF_01416"/>
    </source>
</evidence>